<comment type="function">
    <text evidence="1">Required for insertion of 4Fe-4S clusters for at least IspG.</text>
</comment>
<comment type="cofactor">
    <cofactor evidence="1">
        <name>iron-sulfur cluster</name>
        <dbReference type="ChEBI" id="CHEBI:30408"/>
    </cofactor>
    <text evidence="1">Binds 1 iron-sulfur cluster per subunit.</text>
</comment>
<comment type="subunit">
    <text evidence="1">Homodimer.</text>
</comment>
<comment type="similarity">
    <text evidence="1">Belongs to the HesB/IscA family.</text>
</comment>
<name>ERPA_SERP5</name>
<organism>
    <name type="scientific">Serratia proteamaculans (strain 568)</name>
    <dbReference type="NCBI Taxonomy" id="399741"/>
    <lineage>
        <taxon>Bacteria</taxon>
        <taxon>Pseudomonadati</taxon>
        <taxon>Pseudomonadota</taxon>
        <taxon>Gammaproteobacteria</taxon>
        <taxon>Enterobacterales</taxon>
        <taxon>Yersiniaceae</taxon>
        <taxon>Serratia</taxon>
    </lineage>
</organism>
<gene>
    <name evidence="1" type="primary">erpA</name>
    <name type="ordered locus">Spro_0783</name>
</gene>
<accession>A8G9U9</accession>
<proteinExistence type="inferred from homology"/>
<evidence type="ECO:0000255" key="1">
    <source>
        <dbReference type="HAMAP-Rule" id="MF_01380"/>
    </source>
</evidence>
<sequence length="114" mass="12116">MSDETALPLQFTEAAASKVKVLIADEENPDLKLRVYITGGGCSGFQYGFTFDDKVNDGDMTIEKQGVALVVDPMSLQYLVGGSVDYTEGLEGSRFVVTNPNAKTTCGCGSSFSV</sequence>
<feature type="chain" id="PRO_1000144936" description="Iron-sulfur cluster insertion protein ErpA">
    <location>
        <begin position="1"/>
        <end position="114"/>
    </location>
</feature>
<feature type="binding site" evidence="1">
    <location>
        <position position="42"/>
    </location>
    <ligand>
        <name>iron-sulfur cluster</name>
        <dbReference type="ChEBI" id="CHEBI:30408"/>
    </ligand>
</feature>
<feature type="binding site" evidence="1">
    <location>
        <position position="106"/>
    </location>
    <ligand>
        <name>iron-sulfur cluster</name>
        <dbReference type="ChEBI" id="CHEBI:30408"/>
    </ligand>
</feature>
<feature type="binding site" evidence="1">
    <location>
        <position position="108"/>
    </location>
    <ligand>
        <name>iron-sulfur cluster</name>
        <dbReference type="ChEBI" id="CHEBI:30408"/>
    </ligand>
</feature>
<protein>
    <recommendedName>
        <fullName evidence="1">Iron-sulfur cluster insertion protein ErpA</fullName>
    </recommendedName>
</protein>
<keyword id="KW-0408">Iron</keyword>
<keyword id="KW-0411">Iron-sulfur</keyword>
<keyword id="KW-0479">Metal-binding</keyword>
<dbReference type="EMBL" id="CP000826">
    <property type="protein sequence ID" value="ABV39889.1"/>
    <property type="molecule type" value="Genomic_DNA"/>
</dbReference>
<dbReference type="SMR" id="A8G9U9"/>
<dbReference type="STRING" id="399741.Spro_0783"/>
<dbReference type="KEGG" id="spe:Spro_0783"/>
<dbReference type="eggNOG" id="COG0316">
    <property type="taxonomic scope" value="Bacteria"/>
</dbReference>
<dbReference type="HOGENOM" id="CLU_069054_5_3_6"/>
<dbReference type="OrthoDB" id="9801228at2"/>
<dbReference type="GO" id="GO:0005829">
    <property type="term" value="C:cytosol"/>
    <property type="evidence" value="ECO:0007669"/>
    <property type="project" value="TreeGrafter"/>
</dbReference>
<dbReference type="GO" id="GO:0051537">
    <property type="term" value="F:2 iron, 2 sulfur cluster binding"/>
    <property type="evidence" value="ECO:0007669"/>
    <property type="project" value="UniProtKB-ARBA"/>
</dbReference>
<dbReference type="GO" id="GO:0051539">
    <property type="term" value="F:4 iron, 4 sulfur cluster binding"/>
    <property type="evidence" value="ECO:0007669"/>
    <property type="project" value="TreeGrafter"/>
</dbReference>
<dbReference type="GO" id="GO:0005506">
    <property type="term" value="F:iron ion binding"/>
    <property type="evidence" value="ECO:0007669"/>
    <property type="project" value="UniProtKB-UniRule"/>
</dbReference>
<dbReference type="GO" id="GO:0016226">
    <property type="term" value="P:iron-sulfur cluster assembly"/>
    <property type="evidence" value="ECO:0007669"/>
    <property type="project" value="UniProtKB-UniRule"/>
</dbReference>
<dbReference type="FunFam" id="2.60.300.12:FF:000002">
    <property type="entry name" value="Iron-sulfur cluster insertion protein ErpA"/>
    <property type="match status" value="1"/>
</dbReference>
<dbReference type="Gene3D" id="2.60.300.12">
    <property type="entry name" value="HesB-like domain"/>
    <property type="match status" value="1"/>
</dbReference>
<dbReference type="HAMAP" id="MF_01380">
    <property type="entry name" value="Fe_S_insert_ErpA"/>
    <property type="match status" value="1"/>
</dbReference>
<dbReference type="InterPro" id="IPR000361">
    <property type="entry name" value="FeS_biogenesis"/>
</dbReference>
<dbReference type="InterPro" id="IPR016092">
    <property type="entry name" value="FeS_cluster_insertion"/>
</dbReference>
<dbReference type="InterPro" id="IPR017870">
    <property type="entry name" value="FeS_cluster_insertion_CS"/>
</dbReference>
<dbReference type="InterPro" id="IPR023063">
    <property type="entry name" value="FeS_cluster_insertion_RrpA"/>
</dbReference>
<dbReference type="InterPro" id="IPR035903">
    <property type="entry name" value="HesB-like_dom_sf"/>
</dbReference>
<dbReference type="NCBIfam" id="TIGR00049">
    <property type="entry name" value="iron-sulfur cluster assembly accessory protein"/>
    <property type="match status" value="1"/>
</dbReference>
<dbReference type="NCBIfam" id="NF010147">
    <property type="entry name" value="PRK13623.1"/>
    <property type="match status" value="1"/>
</dbReference>
<dbReference type="PANTHER" id="PTHR43011">
    <property type="entry name" value="IRON-SULFUR CLUSTER ASSEMBLY 2 HOMOLOG, MITOCHONDRIAL"/>
    <property type="match status" value="1"/>
</dbReference>
<dbReference type="PANTHER" id="PTHR43011:SF1">
    <property type="entry name" value="IRON-SULFUR CLUSTER ASSEMBLY 2 HOMOLOG, MITOCHONDRIAL"/>
    <property type="match status" value="1"/>
</dbReference>
<dbReference type="Pfam" id="PF01521">
    <property type="entry name" value="Fe-S_biosyn"/>
    <property type="match status" value="1"/>
</dbReference>
<dbReference type="SUPFAM" id="SSF89360">
    <property type="entry name" value="HesB-like domain"/>
    <property type="match status" value="1"/>
</dbReference>
<dbReference type="PROSITE" id="PS01152">
    <property type="entry name" value="HESB"/>
    <property type="match status" value="1"/>
</dbReference>
<reference key="1">
    <citation type="submission" date="2007-09" db="EMBL/GenBank/DDBJ databases">
        <title>Complete sequence of chromosome of Serratia proteamaculans 568.</title>
        <authorList>
            <consortium name="US DOE Joint Genome Institute"/>
            <person name="Copeland A."/>
            <person name="Lucas S."/>
            <person name="Lapidus A."/>
            <person name="Barry K."/>
            <person name="Glavina del Rio T."/>
            <person name="Dalin E."/>
            <person name="Tice H."/>
            <person name="Pitluck S."/>
            <person name="Chain P."/>
            <person name="Malfatti S."/>
            <person name="Shin M."/>
            <person name="Vergez L."/>
            <person name="Schmutz J."/>
            <person name="Larimer F."/>
            <person name="Land M."/>
            <person name="Hauser L."/>
            <person name="Kyrpides N."/>
            <person name="Kim E."/>
            <person name="Taghavi S."/>
            <person name="Newman L."/>
            <person name="Vangronsveld J."/>
            <person name="van der Lelie D."/>
            <person name="Richardson P."/>
        </authorList>
    </citation>
    <scope>NUCLEOTIDE SEQUENCE [LARGE SCALE GENOMIC DNA]</scope>
    <source>
        <strain>568</strain>
    </source>
</reference>